<protein>
    <recommendedName>
        <fullName>Probable cytochrome c oxidase subunit 1</fullName>
        <ecNumber>7.1.1.9</ecNumber>
    </recommendedName>
    <alternativeName>
        <fullName>Cytochrome aa3 subunit 1</fullName>
    </alternativeName>
    <alternativeName>
        <fullName>Cytochrome c oxidase polypeptide I</fullName>
    </alternativeName>
</protein>
<keyword id="KW-1003">Cell membrane</keyword>
<keyword id="KW-0186">Copper</keyword>
<keyword id="KW-0249">Electron transport</keyword>
<keyword id="KW-0349">Heme</keyword>
<keyword id="KW-0408">Iron</keyword>
<keyword id="KW-0472">Membrane</keyword>
<keyword id="KW-0479">Metal-binding</keyword>
<keyword id="KW-1185">Reference proteome</keyword>
<keyword id="KW-0679">Respiratory chain</keyword>
<keyword id="KW-1278">Translocase</keyword>
<keyword id="KW-0812">Transmembrane</keyword>
<keyword id="KW-1133">Transmembrane helix</keyword>
<keyword id="KW-0813">Transport</keyword>
<comment type="function">
    <text evidence="1">Cytochrome c oxidase is the component of the respiratory chain that catalyzes the reduction of oxygen to water. Subunits 1-3 form the functional core of the enzyme complex. CO I is the catalytic subunit of the enzyme. Electrons originating in cytochrome c are transferred via the copper A center of subunit 2 and heme A of subunit 1 to the bimetallic center formed by heme A3 and copper B (By similarity).</text>
</comment>
<comment type="catalytic activity">
    <reaction>
        <text>4 Fe(II)-[cytochrome c] + O2 + 8 H(+)(in) = 4 Fe(III)-[cytochrome c] + 2 H2O + 4 H(+)(out)</text>
        <dbReference type="Rhea" id="RHEA:11436"/>
        <dbReference type="Rhea" id="RHEA-COMP:10350"/>
        <dbReference type="Rhea" id="RHEA-COMP:14399"/>
        <dbReference type="ChEBI" id="CHEBI:15377"/>
        <dbReference type="ChEBI" id="CHEBI:15378"/>
        <dbReference type="ChEBI" id="CHEBI:15379"/>
        <dbReference type="ChEBI" id="CHEBI:29033"/>
        <dbReference type="ChEBI" id="CHEBI:29034"/>
        <dbReference type="EC" id="7.1.1.9"/>
    </reaction>
</comment>
<comment type="pathway">
    <text>Energy metabolism; oxidative phosphorylation.</text>
</comment>
<comment type="subcellular location">
    <subcellularLocation>
        <location evidence="3">Cell membrane</location>
        <topology evidence="3">Multi-pass membrane protein</topology>
    </subcellularLocation>
</comment>
<comment type="similarity">
    <text evidence="3">Belongs to the heme-copper respiratory oxidase family.</text>
</comment>
<reference key="1">
    <citation type="journal article" date="2002" name="J. Bacteriol.">
        <title>Whole-genome comparison of Mycobacterium tuberculosis clinical and laboratory strains.</title>
        <authorList>
            <person name="Fleischmann R.D."/>
            <person name="Alland D."/>
            <person name="Eisen J.A."/>
            <person name="Carpenter L."/>
            <person name="White O."/>
            <person name="Peterson J.D."/>
            <person name="DeBoy R.T."/>
            <person name="Dodson R.J."/>
            <person name="Gwinn M.L."/>
            <person name="Haft D.H."/>
            <person name="Hickey E.K."/>
            <person name="Kolonay J.F."/>
            <person name="Nelson W.C."/>
            <person name="Umayam L.A."/>
            <person name="Ermolaeva M.D."/>
            <person name="Salzberg S.L."/>
            <person name="Delcher A."/>
            <person name="Utterback T.R."/>
            <person name="Weidman J.F."/>
            <person name="Khouri H.M."/>
            <person name="Gill J."/>
            <person name="Mikula A."/>
            <person name="Bishai W."/>
            <person name="Jacobs W.R. Jr."/>
            <person name="Venter J.C."/>
            <person name="Fraser C.M."/>
        </authorList>
    </citation>
    <scope>NUCLEOTIDE SEQUENCE [LARGE SCALE GENOMIC DNA]</scope>
    <source>
        <strain>CDC 1551 / Oshkosh</strain>
    </source>
</reference>
<organism>
    <name type="scientific">Mycobacterium tuberculosis (strain CDC 1551 / Oshkosh)</name>
    <dbReference type="NCBI Taxonomy" id="83331"/>
    <lineage>
        <taxon>Bacteria</taxon>
        <taxon>Bacillati</taxon>
        <taxon>Actinomycetota</taxon>
        <taxon>Actinomycetes</taxon>
        <taxon>Mycobacteriales</taxon>
        <taxon>Mycobacteriaceae</taxon>
        <taxon>Mycobacterium</taxon>
        <taxon>Mycobacterium tuberculosis complex</taxon>
    </lineage>
</organism>
<dbReference type="EC" id="7.1.1.9"/>
<dbReference type="EMBL" id="AE000516">
    <property type="protein sequence ID" value="AAK47458.1"/>
    <property type="molecule type" value="Genomic_DNA"/>
</dbReference>
<dbReference type="PIR" id="F70860">
    <property type="entry name" value="F70860"/>
</dbReference>
<dbReference type="RefSeq" id="WP_003415946.1">
    <property type="nucleotide sequence ID" value="NZ_KK341227.1"/>
</dbReference>
<dbReference type="SMR" id="P9WP70"/>
<dbReference type="GeneID" id="45427036"/>
<dbReference type="KEGG" id="mtc:MT3128"/>
<dbReference type="PATRIC" id="fig|83331.31.peg.3370"/>
<dbReference type="HOGENOM" id="CLU_011899_7_3_11"/>
<dbReference type="UniPathway" id="UPA00705"/>
<dbReference type="Proteomes" id="UP000001020">
    <property type="component" value="Chromosome"/>
</dbReference>
<dbReference type="GO" id="GO:0005886">
    <property type="term" value="C:plasma membrane"/>
    <property type="evidence" value="ECO:0007669"/>
    <property type="project" value="UniProtKB-SubCell"/>
</dbReference>
<dbReference type="GO" id="GO:0004129">
    <property type="term" value="F:cytochrome-c oxidase activity"/>
    <property type="evidence" value="ECO:0007669"/>
    <property type="project" value="UniProtKB-EC"/>
</dbReference>
<dbReference type="GO" id="GO:0020037">
    <property type="term" value="F:heme binding"/>
    <property type="evidence" value="ECO:0007669"/>
    <property type="project" value="InterPro"/>
</dbReference>
<dbReference type="GO" id="GO:0046872">
    <property type="term" value="F:metal ion binding"/>
    <property type="evidence" value="ECO:0007669"/>
    <property type="project" value="UniProtKB-KW"/>
</dbReference>
<dbReference type="GO" id="GO:0015990">
    <property type="term" value="P:electron transport coupled proton transport"/>
    <property type="evidence" value="ECO:0007669"/>
    <property type="project" value="InterPro"/>
</dbReference>
<dbReference type="GO" id="GO:0006119">
    <property type="term" value="P:oxidative phosphorylation"/>
    <property type="evidence" value="ECO:0007669"/>
    <property type="project" value="UniProtKB-UniPathway"/>
</dbReference>
<dbReference type="GO" id="GO:0022904">
    <property type="term" value="P:respiratory electron transport chain"/>
    <property type="evidence" value="ECO:0007669"/>
    <property type="project" value="TreeGrafter"/>
</dbReference>
<dbReference type="CDD" id="cd01662">
    <property type="entry name" value="Ubiquinol_Oxidase_I"/>
    <property type="match status" value="1"/>
</dbReference>
<dbReference type="FunFam" id="1.20.210.10:FF:000003">
    <property type="entry name" value="Cytochrome c oxidase subunit 1"/>
    <property type="match status" value="1"/>
</dbReference>
<dbReference type="Gene3D" id="1.20.210.10">
    <property type="entry name" value="Cytochrome c oxidase-like, subunit I domain"/>
    <property type="match status" value="1"/>
</dbReference>
<dbReference type="InterPro" id="IPR023616">
    <property type="entry name" value="Cyt_c_oxase-like_su1_dom"/>
</dbReference>
<dbReference type="InterPro" id="IPR036927">
    <property type="entry name" value="Cyt_c_oxase-like_su1_sf"/>
</dbReference>
<dbReference type="InterPro" id="IPR000883">
    <property type="entry name" value="Cyt_C_Oxase_1"/>
</dbReference>
<dbReference type="InterPro" id="IPR023615">
    <property type="entry name" value="Cyt_c_Oxase_su1_BS"/>
</dbReference>
<dbReference type="InterPro" id="IPR014241">
    <property type="entry name" value="Cyt_c_oxidase_su1_bac"/>
</dbReference>
<dbReference type="NCBIfam" id="TIGR02891">
    <property type="entry name" value="CtaD_CoxA"/>
    <property type="match status" value="1"/>
</dbReference>
<dbReference type="PANTHER" id="PTHR10422">
    <property type="entry name" value="CYTOCHROME C OXIDASE SUBUNIT 1"/>
    <property type="match status" value="1"/>
</dbReference>
<dbReference type="PANTHER" id="PTHR10422:SF18">
    <property type="entry name" value="CYTOCHROME C OXIDASE SUBUNIT 1"/>
    <property type="match status" value="1"/>
</dbReference>
<dbReference type="Pfam" id="PF00115">
    <property type="entry name" value="COX1"/>
    <property type="match status" value="1"/>
</dbReference>
<dbReference type="PRINTS" id="PR01165">
    <property type="entry name" value="CYCOXIDASEI"/>
</dbReference>
<dbReference type="SUPFAM" id="SSF81442">
    <property type="entry name" value="Cytochrome c oxidase subunit I-like"/>
    <property type="match status" value="1"/>
</dbReference>
<dbReference type="PROSITE" id="PS50855">
    <property type="entry name" value="COX1"/>
    <property type="match status" value="1"/>
</dbReference>
<dbReference type="PROSITE" id="PS00077">
    <property type="entry name" value="COX1_CUB"/>
    <property type="match status" value="1"/>
</dbReference>
<name>COX1_MYCTO</name>
<feature type="chain" id="PRO_0000427003" description="Probable cytochrome c oxidase subunit 1">
    <location>
        <begin position="1"/>
        <end position="573"/>
    </location>
</feature>
<feature type="transmembrane region" description="Helical" evidence="2">
    <location>
        <begin position="40"/>
        <end position="60"/>
    </location>
</feature>
<feature type="transmembrane region" description="Helical" evidence="2">
    <location>
        <begin position="89"/>
        <end position="109"/>
    </location>
</feature>
<feature type="transmembrane region" description="Helical" evidence="2">
    <location>
        <begin position="121"/>
        <end position="141"/>
    </location>
</feature>
<feature type="transmembrane region" description="Helical" evidence="2">
    <location>
        <begin position="170"/>
        <end position="190"/>
    </location>
</feature>
<feature type="transmembrane region" description="Helical" evidence="2">
    <location>
        <begin position="213"/>
        <end position="233"/>
    </location>
</feature>
<feature type="transmembrane region" description="Helical" evidence="2">
    <location>
        <begin position="258"/>
        <end position="278"/>
    </location>
</feature>
<feature type="transmembrane region" description="Helical" evidence="2">
    <location>
        <begin position="290"/>
        <end position="310"/>
    </location>
</feature>
<feature type="transmembrane region" description="Helical" evidence="2">
    <location>
        <begin position="315"/>
        <end position="335"/>
    </location>
</feature>
<feature type="transmembrane region" description="Helical" evidence="2">
    <location>
        <begin position="359"/>
        <end position="379"/>
    </location>
</feature>
<feature type="transmembrane region" description="Helical" evidence="2">
    <location>
        <begin position="398"/>
        <end position="418"/>
    </location>
</feature>
<feature type="transmembrane region" description="Helical" evidence="2">
    <location>
        <begin position="433"/>
        <end position="453"/>
    </location>
</feature>
<feature type="transmembrane region" description="Helical" evidence="2">
    <location>
        <begin position="476"/>
        <end position="496"/>
    </location>
</feature>
<feature type="binding site" description="axial binding residue" evidence="1">
    <location>
        <position position="86"/>
    </location>
    <ligand>
        <name>Fe(II)-heme a</name>
        <dbReference type="ChEBI" id="CHEBI:61715"/>
    </ligand>
    <ligandPart>
        <name>Fe</name>
        <dbReference type="ChEBI" id="CHEBI:18248"/>
    </ligandPart>
</feature>
<feature type="binding site" evidence="1">
    <location>
        <position position="264"/>
    </location>
    <ligand>
        <name>Cu cation</name>
        <dbReference type="ChEBI" id="CHEBI:23378"/>
        <label>B</label>
    </ligand>
</feature>
<feature type="binding site" evidence="1">
    <location>
        <position position="268"/>
    </location>
    <ligand>
        <name>Cu cation</name>
        <dbReference type="ChEBI" id="CHEBI:23378"/>
        <label>B</label>
    </ligand>
</feature>
<feature type="binding site" evidence="1">
    <location>
        <position position="313"/>
    </location>
    <ligand>
        <name>Cu cation</name>
        <dbReference type="ChEBI" id="CHEBI:23378"/>
        <label>B</label>
    </ligand>
</feature>
<feature type="binding site" evidence="1">
    <location>
        <position position="314"/>
    </location>
    <ligand>
        <name>Cu cation</name>
        <dbReference type="ChEBI" id="CHEBI:23378"/>
        <label>B</label>
    </ligand>
</feature>
<feature type="binding site" description="axial binding residue" evidence="1">
    <location>
        <position position="397"/>
    </location>
    <ligand>
        <name>heme a3</name>
        <dbReference type="ChEBI" id="CHEBI:83282"/>
    </ligand>
    <ligandPart>
        <name>Fe</name>
        <dbReference type="ChEBI" id="CHEBI:18248"/>
    </ligandPart>
</feature>
<feature type="binding site" description="axial binding residue" evidence="1">
    <location>
        <position position="399"/>
    </location>
    <ligand>
        <name>Fe(II)-heme a</name>
        <dbReference type="ChEBI" id="CHEBI:61715"/>
    </ligand>
    <ligandPart>
        <name>Fe</name>
        <dbReference type="ChEBI" id="CHEBI:18248"/>
    </ligandPart>
</feature>
<feature type="cross-link" description="1'-histidyl-3'-tyrosine (His-Tyr)" evidence="1">
    <location>
        <begin position="264"/>
        <end position="268"/>
    </location>
</feature>
<accession>P9WP70</accession>
<accession>L0TBM3</accession>
<accession>O53290</accession>
<accession>P63852</accession>
<proteinExistence type="inferred from homology"/>
<sequence length="573" mass="63673">MTAEAPPLGELEAIRPYPARTGPKGSLVYKLITTTDHKMIGIMYCVACISFFFIGGLLALLMRTELAAPGLQFLSNEQFNQLFTMHGTIMLLFYATPIVFGFANLVLPLQIGAPDVAFPRLNAFSFWLFVFGATIGAAGFITPGGAADFGWTAYTPLTDAIHSPGAGGDLWIMGLIVAGLGTILGAVNMITTVVCMRAPGMTMFRMPIFTWNIMVTSILILIAFPLLTAALFGLAADRHLGAHIYDAANGGVLLWQHLFWFFGHPEVYIIALPFFGIVSEIFPVFSRKPIFGYTTLVYATLSIAALSVAVWAHHMFATGAVLLPFFSFMTYLIAVPTGIKFFNWIGTMWKGQLTFETPMLFSVGFMVTFLLGGLTGVLLASPPLDFHVTDSYFVVAHFHYVLFGTIVFATFAGIYFWFPKMTGRLLDERLGKLHFWLTFIGFHTTFLVQHWLGDEGMPRRYADYLPTDGFQGLNVVSTIGAFILGASMFPFVWNVFKSWRYGEVVTVDDPWGYGNSLEWATSCPPPRHNFTELPRIRSERPAFELHYPHMVERLRAEAHVGRHHDEPAMVTSS</sequence>
<gene>
    <name type="primary">ctaD</name>
    <name type="ordered locus">MT3128</name>
</gene>
<evidence type="ECO:0000250" key="1"/>
<evidence type="ECO:0000255" key="2"/>
<evidence type="ECO:0000305" key="3"/>